<comment type="function">
    <text evidence="1">Prenyltransferase that catalyzes in vivo the transfer of the heptaprenyl moiety of heptaprenyl pyrophosphate (HepPP; 35 carbon atoms) to the C3 hydroxyl of sn-glycerol-1-phosphate (G1P), producing heptaprenylglyceryl phosphate (HepGP). This reaction is an ether-bond-formation step in the biosynthesis of archaea-type G1P-based membrane lipids found in Bacillales.</text>
</comment>
<comment type="catalytic activity">
    <reaction evidence="1">
        <text>sn-glycerol 1-phosphate + all-trans-heptaprenyl diphosphate = 3-heptaprenyl-sn-glycero-1-phosphate + diphosphate</text>
        <dbReference type="Rhea" id="RHEA:33495"/>
        <dbReference type="ChEBI" id="CHEBI:33019"/>
        <dbReference type="ChEBI" id="CHEBI:57685"/>
        <dbReference type="ChEBI" id="CHEBI:58206"/>
        <dbReference type="ChEBI" id="CHEBI:64781"/>
        <dbReference type="EC" id="2.5.1.n9"/>
    </reaction>
</comment>
<comment type="cofactor">
    <cofactor evidence="1">
        <name>Mg(2+)</name>
        <dbReference type="ChEBI" id="CHEBI:18420"/>
    </cofactor>
</comment>
<comment type="pathway">
    <text evidence="1">Membrane lipid metabolism; glycerophospholipid metabolism.</text>
</comment>
<comment type="subunit">
    <text evidence="1">Homodimer.</text>
</comment>
<comment type="similarity">
    <text evidence="1">Belongs to the GGGP/HepGP synthase family. Group I subfamily.</text>
</comment>
<dbReference type="EC" id="2.5.1.n9" evidence="1"/>
<dbReference type="EMBL" id="BA000017">
    <property type="protein sequence ID" value="BAB58068.1"/>
    <property type="molecule type" value="Genomic_DNA"/>
</dbReference>
<dbReference type="RefSeq" id="WP_000272054.1">
    <property type="nucleotide sequence ID" value="NC_002758.2"/>
</dbReference>
<dbReference type="SMR" id="Q931N1"/>
<dbReference type="KEGG" id="sav:SAV1906"/>
<dbReference type="HOGENOM" id="CLU_095211_0_0_9"/>
<dbReference type="PhylomeDB" id="Q931N1"/>
<dbReference type="UniPathway" id="UPA00940"/>
<dbReference type="Proteomes" id="UP000002481">
    <property type="component" value="Chromosome"/>
</dbReference>
<dbReference type="GO" id="GO:0120536">
    <property type="term" value="F:heptaprenylglyceryl phosphate synthase activity"/>
    <property type="evidence" value="ECO:0007669"/>
    <property type="project" value="RHEA"/>
</dbReference>
<dbReference type="GO" id="GO:0000287">
    <property type="term" value="F:magnesium ion binding"/>
    <property type="evidence" value="ECO:0007669"/>
    <property type="project" value="UniProtKB-UniRule"/>
</dbReference>
<dbReference type="GO" id="GO:0046474">
    <property type="term" value="P:glycerophospholipid biosynthetic process"/>
    <property type="evidence" value="ECO:0007669"/>
    <property type="project" value="UniProtKB-UniRule"/>
</dbReference>
<dbReference type="CDD" id="cd02812">
    <property type="entry name" value="PcrB_like"/>
    <property type="match status" value="1"/>
</dbReference>
<dbReference type="FunFam" id="3.20.20.390:FF:000001">
    <property type="entry name" value="Heptaprenylglyceryl phosphate synthase"/>
    <property type="match status" value="1"/>
</dbReference>
<dbReference type="Gene3D" id="3.20.20.390">
    <property type="entry name" value="FMN-linked oxidoreductases"/>
    <property type="match status" value="1"/>
</dbReference>
<dbReference type="HAMAP" id="MF_00112">
    <property type="entry name" value="GGGP_HepGP_synthase"/>
    <property type="match status" value="1"/>
</dbReference>
<dbReference type="InterPro" id="IPR039074">
    <property type="entry name" value="GGGP/HepGP_synthase_I"/>
</dbReference>
<dbReference type="InterPro" id="IPR038597">
    <property type="entry name" value="GGGP/HepGP_synthase_sf"/>
</dbReference>
<dbReference type="InterPro" id="IPR008205">
    <property type="entry name" value="GGGP_HepGP_synthase"/>
</dbReference>
<dbReference type="NCBIfam" id="TIGR01768">
    <property type="entry name" value="GGGP-family"/>
    <property type="match status" value="1"/>
</dbReference>
<dbReference type="NCBIfam" id="NF003197">
    <property type="entry name" value="PRK04169.1-1"/>
    <property type="match status" value="1"/>
</dbReference>
<dbReference type="NCBIfam" id="NF003199">
    <property type="entry name" value="PRK04169.1-3"/>
    <property type="match status" value="1"/>
</dbReference>
<dbReference type="NCBIfam" id="NF003200">
    <property type="entry name" value="PRK04169.1-4"/>
    <property type="match status" value="1"/>
</dbReference>
<dbReference type="PANTHER" id="PTHR40029">
    <property type="match status" value="1"/>
</dbReference>
<dbReference type="PANTHER" id="PTHR40029:SF2">
    <property type="entry name" value="HEPTAPRENYLGLYCERYL PHOSPHATE SYNTHASE"/>
    <property type="match status" value="1"/>
</dbReference>
<dbReference type="Pfam" id="PF01884">
    <property type="entry name" value="PcrB"/>
    <property type="match status" value="1"/>
</dbReference>
<dbReference type="SUPFAM" id="SSF51395">
    <property type="entry name" value="FMN-linked oxidoreductases"/>
    <property type="match status" value="1"/>
</dbReference>
<organism>
    <name type="scientific">Staphylococcus aureus (strain Mu50 / ATCC 700699)</name>
    <dbReference type="NCBI Taxonomy" id="158878"/>
    <lineage>
        <taxon>Bacteria</taxon>
        <taxon>Bacillati</taxon>
        <taxon>Bacillota</taxon>
        <taxon>Bacilli</taxon>
        <taxon>Bacillales</taxon>
        <taxon>Staphylococcaceae</taxon>
        <taxon>Staphylococcus</taxon>
    </lineage>
</organism>
<feature type="chain" id="PRO_0000138718" description="Heptaprenylglyceryl phosphate synthase">
    <location>
        <begin position="1"/>
        <end position="230"/>
    </location>
</feature>
<feature type="binding site" evidence="1">
    <location>
        <position position="12"/>
    </location>
    <ligand>
        <name>sn-glycerol 1-phosphate</name>
        <dbReference type="ChEBI" id="CHEBI:57685"/>
    </ligand>
</feature>
<feature type="binding site" evidence="1">
    <location>
        <position position="14"/>
    </location>
    <ligand>
        <name>Mg(2+)</name>
        <dbReference type="ChEBI" id="CHEBI:18420"/>
    </ligand>
</feature>
<feature type="binding site" evidence="1">
    <location>
        <position position="40"/>
    </location>
    <ligand>
        <name>Mg(2+)</name>
        <dbReference type="ChEBI" id="CHEBI:18420"/>
    </ligand>
</feature>
<feature type="binding site" evidence="1">
    <location>
        <begin position="159"/>
        <end position="164"/>
    </location>
    <ligand>
        <name>sn-glycerol 1-phosphate</name>
        <dbReference type="ChEBI" id="CHEBI:57685"/>
    </ligand>
</feature>
<feature type="binding site" evidence="1">
    <location>
        <position position="189"/>
    </location>
    <ligand>
        <name>sn-glycerol 1-phosphate</name>
        <dbReference type="ChEBI" id="CHEBI:57685"/>
    </ligand>
</feature>
<feature type="binding site" evidence="1">
    <location>
        <begin position="209"/>
        <end position="210"/>
    </location>
    <ligand>
        <name>sn-glycerol 1-phosphate</name>
        <dbReference type="ChEBI" id="CHEBI:57685"/>
    </ligand>
</feature>
<accession>Q931N1</accession>
<gene>
    <name evidence="1" type="primary">pcrB</name>
    <name type="ordered locus">SAV1906</name>
</gene>
<keyword id="KW-0444">Lipid biosynthesis</keyword>
<keyword id="KW-0443">Lipid metabolism</keyword>
<keyword id="KW-0460">Magnesium</keyword>
<keyword id="KW-0479">Metal-binding</keyword>
<keyword id="KW-0594">Phospholipid biosynthesis</keyword>
<keyword id="KW-1208">Phospholipid metabolism</keyword>
<keyword id="KW-0808">Transferase</keyword>
<proteinExistence type="inferred from homology"/>
<evidence type="ECO:0000255" key="1">
    <source>
        <dbReference type="HAMAP-Rule" id="MF_00112"/>
    </source>
</evidence>
<name>PCRB_STAAM</name>
<protein>
    <recommendedName>
        <fullName evidence="1">Heptaprenylglyceryl phosphate synthase</fullName>
        <shortName evidence="1">HepGP synthase</shortName>
        <ecNumber evidence="1">2.5.1.n9</ecNumber>
    </recommendedName>
    <alternativeName>
        <fullName evidence="1">Glycerol-1-phosphate heptaprenyltransferase</fullName>
    </alternativeName>
</protein>
<reference key="1">
    <citation type="journal article" date="2001" name="Lancet">
        <title>Whole genome sequencing of meticillin-resistant Staphylococcus aureus.</title>
        <authorList>
            <person name="Kuroda M."/>
            <person name="Ohta T."/>
            <person name="Uchiyama I."/>
            <person name="Baba T."/>
            <person name="Yuzawa H."/>
            <person name="Kobayashi I."/>
            <person name="Cui L."/>
            <person name="Oguchi A."/>
            <person name="Aoki K."/>
            <person name="Nagai Y."/>
            <person name="Lian J.-Q."/>
            <person name="Ito T."/>
            <person name="Kanamori M."/>
            <person name="Matsumaru H."/>
            <person name="Maruyama A."/>
            <person name="Murakami H."/>
            <person name="Hosoyama A."/>
            <person name="Mizutani-Ui Y."/>
            <person name="Takahashi N.K."/>
            <person name="Sawano T."/>
            <person name="Inoue R."/>
            <person name="Kaito C."/>
            <person name="Sekimizu K."/>
            <person name="Hirakawa H."/>
            <person name="Kuhara S."/>
            <person name="Goto S."/>
            <person name="Yabuzaki J."/>
            <person name="Kanehisa M."/>
            <person name="Yamashita A."/>
            <person name="Oshima K."/>
            <person name="Furuya K."/>
            <person name="Yoshino C."/>
            <person name="Shiba T."/>
            <person name="Hattori M."/>
            <person name="Ogasawara N."/>
            <person name="Hayashi H."/>
            <person name="Hiramatsu K."/>
        </authorList>
    </citation>
    <scope>NUCLEOTIDE SEQUENCE [LARGE SCALE GENOMIC DNA]</scope>
    <source>
        <strain>Mu50 / ATCC 700699</strain>
    </source>
</reference>
<sequence>MYDIKKWRHIFKLDPAKHISDDDLDAICMSQTDAIMIGGTDDVTEDNVIHLMSKIRRYPLPLVLEISNIESVMPGFDFYFVPTVLNSTDVAFHNGTLLEALKTYGHSIDFEEVIFEGYVVCNADSKVAKHTKANTDLTTEDLEAYAQMVNHMYRLPVMYIEYSGIYGDVSKVQAVSEHLTETQLFYGGGISSEQQATEMAAIADTIIVGDIIYKDIKKALKTVKIKESSK</sequence>